<protein>
    <recommendedName>
        <fullName evidence="5">Alpha-conotoxin PiXXA</fullName>
    </recommendedName>
</protein>
<organism>
    <name type="scientific">Conus princeps</name>
    <name type="common">Prince cone</name>
    <dbReference type="NCBI Taxonomy" id="101311"/>
    <lineage>
        <taxon>Eukaryota</taxon>
        <taxon>Metazoa</taxon>
        <taxon>Spiralia</taxon>
        <taxon>Lophotrochozoa</taxon>
        <taxon>Mollusca</taxon>
        <taxon>Gastropoda</taxon>
        <taxon>Caenogastropoda</taxon>
        <taxon>Neogastropoda</taxon>
        <taxon>Conoidea</taxon>
        <taxon>Conidae</taxon>
        <taxon>Conus</taxon>
        <taxon>Ductoconus</taxon>
    </lineage>
</organism>
<sequence length="95" mass="10349">MPKLEMMLLVLLILPLPYFDAAGGQSVHVDGYGDGLARYLQRGERAVKKTCIRSTPGSNWGRCCLTKMCHTLCCARSDCTCVYRSGKGHGCSCTS</sequence>
<feature type="signal peptide" evidence="3">
    <location>
        <begin position="1"/>
        <end position="24"/>
    </location>
</feature>
<feature type="propeptide" id="PRO_0000457360" evidence="4">
    <location>
        <begin position="25"/>
        <end position="45"/>
    </location>
</feature>
<feature type="chain" id="PRO_0000457361" description="Alpha-conotoxin PiXXA" evidence="7">
    <location>
        <begin position="46"/>
        <end position="95"/>
    </location>
</feature>
<feature type="modified residue" description="4-hydroxyproline" evidence="4">
    <location>
        <position position="56"/>
    </location>
</feature>
<feature type="disulfide bond" description="Interchain (with C-63)" evidence="1">
    <location>
        <position position="51"/>
    </location>
</feature>
<feature type="disulfide bond" description="Interchain (with C-51)" evidence="1">
    <location>
        <position position="63"/>
    </location>
</feature>
<feature type="disulfide bond" evidence="1">
    <location>
        <begin position="64"/>
        <end position="73"/>
    </location>
</feature>
<feature type="disulfide bond" evidence="1">
    <location>
        <begin position="69"/>
        <end position="81"/>
    </location>
</feature>
<feature type="disulfide bond" evidence="1">
    <location>
        <begin position="74"/>
        <end position="91"/>
    </location>
</feature>
<feature type="disulfide bond" evidence="1">
    <location>
        <begin position="79"/>
        <end position="93"/>
    </location>
</feature>
<feature type="sequence conflict" description="In Ref. 1; AA sequence." evidence="6" ref="1">
    <original>A</original>
    <variation>AC</variation>
    <location>
        <position position="75"/>
    </location>
</feature>
<dbReference type="SMR" id="P0DQX2"/>
<dbReference type="GO" id="GO:0005576">
    <property type="term" value="C:extracellular region"/>
    <property type="evidence" value="ECO:0007669"/>
    <property type="project" value="UniProtKB-SubCell"/>
</dbReference>
<dbReference type="GO" id="GO:0035792">
    <property type="term" value="C:host cell postsynaptic membrane"/>
    <property type="evidence" value="ECO:0007669"/>
    <property type="project" value="UniProtKB-KW"/>
</dbReference>
<dbReference type="GO" id="GO:0030550">
    <property type="term" value="F:acetylcholine receptor inhibitor activity"/>
    <property type="evidence" value="ECO:0007669"/>
    <property type="project" value="UniProtKB-KW"/>
</dbReference>
<dbReference type="GO" id="GO:0099106">
    <property type="term" value="F:ion channel regulator activity"/>
    <property type="evidence" value="ECO:0007669"/>
    <property type="project" value="UniProtKB-KW"/>
</dbReference>
<dbReference type="GO" id="GO:0090729">
    <property type="term" value="F:toxin activity"/>
    <property type="evidence" value="ECO:0007669"/>
    <property type="project" value="UniProtKB-KW"/>
</dbReference>
<accession>P0DQX2</accession>
<reference key="1">
    <citation type="journal article" date="2019" name="Toxins">
        <title>AlphaD-conotoxins in species of the Eastern Pacific: the case of Conus princeps from Mexico.</title>
        <authorList>
            <person name="Hernandez-Samano A.C."/>
            <person name="Falcon A."/>
            <person name="Zamudio F."/>
            <person name="Batista C.V.F."/>
            <person name="Michel-Morfin J.E."/>
            <person name="Landa-Jaime V."/>
            <person name="Lopez-Vera E."/>
            <person name="Jeziorski M.C."/>
            <person name="Aguilar M.B."/>
        </authorList>
    </citation>
    <scope>NUCLEOTIDE SEQUENCE [MRNA]</scope>
    <scope>PROTEIN SEQUENCE OF 46-76</scope>
    <scope>HYDROXYLATION AT PRO-56</scope>
    <scope>SUBUNIT</scope>
    <source>
        <tissue>Venom</tissue>
        <tissue>Venom duct</tissue>
    </source>
</reference>
<keyword id="KW-0008">Acetylcholine receptor inhibiting toxin</keyword>
<keyword id="KW-0903">Direct protein sequencing</keyword>
<keyword id="KW-1015">Disulfide bond</keyword>
<keyword id="KW-0379">Hydroxylation</keyword>
<keyword id="KW-0872">Ion channel impairing toxin</keyword>
<keyword id="KW-0528">Neurotoxin</keyword>
<keyword id="KW-0629">Postsynaptic neurotoxin</keyword>
<keyword id="KW-0964">Secreted</keyword>
<keyword id="KW-0732">Signal</keyword>
<keyword id="KW-0800">Toxin</keyword>
<comment type="function">
    <text evidence="2 4">Alpha-conotoxins act on postsynaptic membranes, they bind to the nicotinic acetylcholine receptors (nAChR) and thus inhibit them. Through its two C-terminal domains, this homodimeric protein would bind to two nAChR allosteric sites, located outside the nAChR C-loop of the principal binding face and at the adjacent binding interface in a clockwise direction (By similarity). This toxin slowly and reversibly inhibits the ACh-induced response of the human alpha-7/CHRNA7 nAChR subtype (IC(50)=6.2 uM) (PubMed:31336928).</text>
</comment>
<comment type="subunit">
    <text evidence="4">Homodimer; disulfide-linked.</text>
</comment>
<comment type="subcellular location">
    <subcellularLocation>
        <location evidence="4">Secreted</location>
    </subcellularLocation>
</comment>
<comment type="tissue specificity">
    <text evidence="7">Expressed by the venom duct.</text>
</comment>
<comment type="domain">
    <text evidence="6">The cysteine framework is XX (C-CC-C-CC-C-C-C-C).</text>
</comment>
<comment type="domain">
    <text evidence="2">Displays a mini-granulin fold, a structure composed of two short, stacked beta-hairpins connected by two parallel disulfide bonds. This newly described fold is derived from the same cysteine connectivity as knottins (ICK fold). The name 'mini-granulin fold' comes from the structural homology with the N-terminal region of the human granulin.</text>
</comment>
<comment type="PTM">
    <text evidence="4">The homodimer contains 10 disulfide bonds.</text>
</comment>
<comment type="miscellaneous">
    <text evidence="4">Negative results: does not affect the human alpha-3-beta-2 subtype (when tested at 6.5 uM).</text>
</comment>
<comment type="similarity">
    <text evidence="6">Belongs to the conotoxin D superfamily.</text>
</comment>
<evidence type="ECO:0000250" key="1">
    <source>
        <dbReference type="UniProtKB" id="A0A0A0VBX4"/>
    </source>
</evidence>
<evidence type="ECO:0000250" key="2">
    <source>
        <dbReference type="UniProtKB" id="P0C1W6"/>
    </source>
</evidence>
<evidence type="ECO:0000255" key="3"/>
<evidence type="ECO:0000269" key="4">
    <source>
    </source>
</evidence>
<evidence type="ECO:0000303" key="5">
    <source>
    </source>
</evidence>
<evidence type="ECO:0000305" key="6"/>
<evidence type="ECO:0000305" key="7">
    <source>
    </source>
</evidence>
<proteinExistence type="evidence at protein level"/>
<name>CDKA_CONPG</name>